<protein>
    <recommendedName>
        <fullName evidence="1">DNA-directed RNA polymerase subunit beta</fullName>
        <ecNumber evidence="1">2.7.7.6</ecNumber>
    </recommendedName>
    <alternativeName>
        <fullName evidence="1">PEP</fullName>
    </alternativeName>
    <alternativeName>
        <fullName evidence="1">Plastid-encoded RNA polymerase subunit beta</fullName>
        <shortName evidence="1">RNA polymerase subunit beta</shortName>
    </alternativeName>
</protein>
<comment type="function">
    <text evidence="1">DNA-dependent RNA polymerase catalyzes the transcription of DNA into RNA using the four ribonucleoside triphosphates as substrates.</text>
</comment>
<comment type="catalytic activity">
    <reaction evidence="1">
        <text>RNA(n) + a ribonucleoside 5'-triphosphate = RNA(n+1) + diphosphate</text>
        <dbReference type="Rhea" id="RHEA:21248"/>
        <dbReference type="Rhea" id="RHEA-COMP:14527"/>
        <dbReference type="Rhea" id="RHEA-COMP:17342"/>
        <dbReference type="ChEBI" id="CHEBI:33019"/>
        <dbReference type="ChEBI" id="CHEBI:61557"/>
        <dbReference type="ChEBI" id="CHEBI:140395"/>
        <dbReference type="EC" id="2.7.7.6"/>
    </reaction>
</comment>
<comment type="subunit">
    <text evidence="1">In plastids the minimal PEP RNA polymerase catalytic core is composed of four subunits: alpha, beta, beta', and beta''. When a (nuclear-encoded) sigma factor is associated with the core the holoenzyme is formed, which can initiate transcription.</text>
</comment>
<comment type="subcellular location">
    <subcellularLocation>
        <location>Plastid</location>
        <location>Chloroplast</location>
    </subcellularLocation>
</comment>
<comment type="similarity">
    <text evidence="1">Belongs to the RNA polymerase beta chain family.</text>
</comment>
<reference key="1">
    <citation type="journal article" date="2007" name="Mol. Phylogenet. Evol.">
        <title>Phylogenetic and evolutionary implications of complete chloroplast genome sequences of four early-diverging angiosperms: Buxus (Buxaceae), Chloranthus (Chloranthaceae), Dioscorea (Dioscoreaceae), and Illicium (Schisandraceae).</title>
        <authorList>
            <person name="Hansen D.R."/>
            <person name="Dastidar S.G."/>
            <person name="Cai Z."/>
            <person name="Penaflor C."/>
            <person name="Kuehl J.V."/>
            <person name="Boore J.L."/>
            <person name="Jansen R.K."/>
        </authorList>
    </citation>
    <scope>NUCLEOTIDE SEQUENCE [LARGE SCALE GENOMIC DNA]</scope>
</reference>
<accession>A6MMB4</accession>
<dbReference type="EC" id="2.7.7.6" evidence="1"/>
<dbReference type="EMBL" id="EF380352">
    <property type="protein sequence ID" value="ABQ43252.1"/>
    <property type="molecule type" value="Genomic_DNA"/>
</dbReference>
<dbReference type="RefSeq" id="YP_001294090.1">
    <property type="nucleotide sequence ID" value="NC_009598.1"/>
</dbReference>
<dbReference type="SMR" id="A6MMB4"/>
<dbReference type="GeneID" id="5236445"/>
<dbReference type="GO" id="GO:0009507">
    <property type="term" value="C:chloroplast"/>
    <property type="evidence" value="ECO:0007669"/>
    <property type="project" value="UniProtKB-SubCell"/>
</dbReference>
<dbReference type="GO" id="GO:0000428">
    <property type="term" value="C:DNA-directed RNA polymerase complex"/>
    <property type="evidence" value="ECO:0007669"/>
    <property type="project" value="UniProtKB-KW"/>
</dbReference>
<dbReference type="GO" id="GO:0005739">
    <property type="term" value="C:mitochondrion"/>
    <property type="evidence" value="ECO:0007669"/>
    <property type="project" value="GOC"/>
</dbReference>
<dbReference type="GO" id="GO:0003677">
    <property type="term" value="F:DNA binding"/>
    <property type="evidence" value="ECO:0007669"/>
    <property type="project" value="UniProtKB-UniRule"/>
</dbReference>
<dbReference type="GO" id="GO:0003899">
    <property type="term" value="F:DNA-directed RNA polymerase activity"/>
    <property type="evidence" value="ECO:0007669"/>
    <property type="project" value="UniProtKB-UniRule"/>
</dbReference>
<dbReference type="GO" id="GO:0032549">
    <property type="term" value="F:ribonucleoside binding"/>
    <property type="evidence" value="ECO:0007669"/>
    <property type="project" value="InterPro"/>
</dbReference>
<dbReference type="GO" id="GO:0006351">
    <property type="term" value="P:DNA-templated transcription"/>
    <property type="evidence" value="ECO:0007669"/>
    <property type="project" value="UniProtKB-UniRule"/>
</dbReference>
<dbReference type="CDD" id="cd00653">
    <property type="entry name" value="RNA_pol_B_RPB2"/>
    <property type="match status" value="1"/>
</dbReference>
<dbReference type="FunFam" id="3.90.1110.10:FF:000009">
    <property type="entry name" value="DNA-directed RNA polymerase subunit beta"/>
    <property type="match status" value="1"/>
</dbReference>
<dbReference type="Gene3D" id="2.40.50.100">
    <property type="match status" value="1"/>
</dbReference>
<dbReference type="Gene3D" id="2.40.50.150">
    <property type="match status" value="1"/>
</dbReference>
<dbReference type="Gene3D" id="3.90.1100.10">
    <property type="match status" value="1"/>
</dbReference>
<dbReference type="Gene3D" id="2.30.150.10">
    <property type="entry name" value="DNA-directed RNA polymerase, beta subunit, external 1 domain"/>
    <property type="match status" value="1"/>
</dbReference>
<dbReference type="Gene3D" id="2.40.270.10">
    <property type="entry name" value="DNA-directed RNA polymerase, subunit 2, domain 6"/>
    <property type="match status" value="1"/>
</dbReference>
<dbReference type="Gene3D" id="3.90.1800.10">
    <property type="entry name" value="RNA polymerase alpha subunit dimerisation domain"/>
    <property type="match status" value="1"/>
</dbReference>
<dbReference type="Gene3D" id="3.90.1110.10">
    <property type="entry name" value="RNA polymerase Rpb2, domain 2"/>
    <property type="match status" value="1"/>
</dbReference>
<dbReference type="HAMAP" id="MF_01321">
    <property type="entry name" value="RNApol_bact_RpoB"/>
    <property type="match status" value="1"/>
</dbReference>
<dbReference type="InterPro" id="IPR042107">
    <property type="entry name" value="DNA-dir_RNA_pol_bsu_ext_1_sf"/>
</dbReference>
<dbReference type="InterPro" id="IPR015712">
    <property type="entry name" value="DNA-dir_RNA_pol_su2"/>
</dbReference>
<dbReference type="InterPro" id="IPR007120">
    <property type="entry name" value="DNA-dir_RNAP_su2_dom"/>
</dbReference>
<dbReference type="InterPro" id="IPR037033">
    <property type="entry name" value="DNA-dir_RNAP_su2_hyb_sf"/>
</dbReference>
<dbReference type="InterPro" id="IPR010243">
    <property type="entry name" value="RNA_pol_bsu_bac"/>
</dbReference>
<dbReference type="InterPro" id="IPR007121">
    <property type="entry name" value="RNA_pol_bsu_CS"/>
</dbReference>
<dbReference type="InterPro" id="IPR007642">
    <property type="entry name" value="RNA_pol_Rpb2_2"/>
</dbReference>
<dbReference type="InterPro" id="IPR037034">
    <property type="entry name" value="RNA_pol_Rpb2_2_sf"/>
</dbReference>
<dbReference type="InterPro" id="IPR007645">
    <property type="entry name" value="RNA_pol_Rpb2_3"/>
</dbReference>
<dbReference type="InterPro" id="IPR007641">
    <property type="entry name" value="RNA_pol_Rpb2_7"/>
</dbReference>
<dbReference type="InterPro" id="IPR014724">
    <property type="entry name" value="RNA_pol_RPB2_OB-fold"/>
</dbReference>
<dbReference type="NCBIfam" id="NF001616">
    <property type="entry name" value="PRK00405.1"/>
    <property type="match status" value="1"/>
</dbReference>
<dbReference type="PANTHER" id="PTHR20856">
    <property type="entry name" value="DNA-DIRECTED RNA POLYMERASE I SUBUNIT 2"/>
    <property type="match status" value="1"/>
</dbReference>
<dbReference type="Pfam" id="PF04561">
    <property type="entry name" value="RNA_pol_Rpb2_2"/>
    <property type="match status" value="1"/>
</dbReference>
<dbReference type="Pfam" id="PF04565">
    <property type="entry name" value="RNA_pol_Rpb2_3"/>
    <property type="match status" value="1"/>
</dbReference>
<dbReference type="Pfam" id="PF00562">
    <property type="entry name" value="RNA_pol_Rpb2_6"/>
    <property type="match status" value="1"/>
</dbReference>
<dbReference type="Pfam" id="PF04560">
    <property type="entry name" value="RNA_pol_Rpb2_7"/>
    <property type="match status" value="1"/>
</dbReference>
<dbReference type="SUPFAM" id="SSF64484">
    <property type="entry name" value="beta and beta-prime subunits of DNA dependent RNA-polymerase"/>
    <property type="match status" value="1"/>
</dbReference>
<dbReference type="PROSITE" id="PS01166">
    <property type="entry name" value="RNA_POL_BETA"/>
    <property type="match status" value="1"/>
</dbReference>
<feature type="chain" id="PRO_0000300436" description="DNA-directed RNA polymerase subunit beta">
    <location>
        <begin position="1"/>
        <end position="1070"/>
    </location>
</feature>
<name>RPOB_CHLSC</name>
<proteinExistence type="inferred from homology"/>
<evidence type="ECO:0000255" key="1">
    <source>
        <dbReference type="HAMAP-Rule" id="MF_01321"/>
    </source>
</evidence>
<geneLocation type="chloroplast"/>
<keyword id="KW-0150">Chloroplast</keyword>
<keyword id="KW-0240">DNA-directed RNA polymerase</keyword>
<keyword id="KW-0548">Nucleotidyltransferase</keyword>
<keyword id="KW-0934">Plastid</keyword>
<keyword id="KW-0804">Transcription</keyword>
<keyword id="KW-0808">Transferase</keyword>
<gene>
    <name evidence="1" type="primary">rpoB</name>
</gene>
<organism>
    <name type="scientific">Chloranthus spicatus</name>
    <name type="common">Chulantree</name>
    <name type="synonym">Nigrina spicata</name>
    <dbReference type="NCBI Taxonomy" id="13006"/>
    <lineage>
        <taxon>Eukaryota</taxon>
        <taxon>Viridiplantae</taxon>
        <taxon>Streptophyta</taxon>
        <taxon>Embryophyta</taxon>
        <taxon>Tracheophyta</taxon>
        <taxon>Spermatophyta</taxon>
        <taxon>Magnoliopsida</taxon>
        <taxon>Chloranthales</taxon>
        <taxon>Chloranthaceae</taxon>
        <taxon>Chloranthus</taxon>
    </lineage>
</organism>
<sequence length="1070" mass="120763">MLRDGNEGMSTIPGFNQIQFEGFCRFIDQGLTEELHKFPKIEDTDQEIEFQLFVETYQLVEPLIKERDAVYESLTYSSELYVPAGLIWKTSRDMQEQTVFIGNIPLMNSLGTSIVNGIYRIVINQILQSPGIYYRSELDHNGISVYTGTIISDWGGRSELEIDRKARIWARVSRKQKISILVPSSAMGSNLREILDNVCYPEIFLSFPNDKEKKKFGSKENAILEFYQQFACVGGDPIFSESLCKELQKKFFQQRCELGRIGRRNMNRRLNLDIPQNNIFLLPRDVLAAADHLIGMKFGMGTLDDMNHLKNKRIRSVADLLQDQFGLALVRLENVVRGTICGAIRHKLIPTPHNLVTSTPLTTTYESFFGLHPLSQVLDRTNPLTQIVHGRKSSYLGPGGLTGRTASFRIRDIHPSHYGRICPIDTSEGINVGLIGSLAIHARIGHWGSIESPFYEIYERSKEVQMVYLSPSRDEYYMVAAGNSLALNQGIQEEQVVPARYRQEFLTIAWEQIHLRSIFPFQYFSIGASLIPFIEHNDANRALMSSNMQRQAVPLSRSEKCIVGTGLEHQAALDSGVSVIAEHEGKIIYTETNKIVFSGNGDTISIPLVMYQRSNKNTCMHQNPQVQRGKCIKKGQILAGGASTVGGELALGKNILVAYMPWEGYNSEDAVLISERLVYGDIYTSFHIRKYEIKTHVTSQGPERITKEIPHLEANLLRNLDKNGIVMLGSWIETGDILVGKLTPQTAKESSYAPEDRLLRAILGIQVSTTRETCLKLPIGGRGRVIDVRWIQKKGGSSYNPETIRVYISQKREIKVGDKVAGRHGNKGIISKILPRQDMPYLQDGRPVDMVFNPLGVPSRMNVGQIFECSLGLAGDLLDRHYRIAPFDERYEQEASRKLVFPELYEASKQTANPWVFEPEYPGKSRIFDGRTGDPFEQPVIMGKSYILKLIHQVDDKIHGRSSGHYALVTQQPLRGRAKQGGQRVGEMEVWALEGFGVAHISQEMLTYKSDHIRARQEVLGTTIIGGTILNPEDAPESFRLLIRELRSLALELNHFLVSEKNFQINRKEA</sequence>